<sequence>MLEHFCECYSNLSGLILCPVLGSITPLFIPNSRIRPIRLIGLCASLITFLYSPVPRIQFDSSTAKSQFVESLRWLPYENINFYLGIDGISLFFVILTTFLIPICISVGWSGMRSYGKEYITAFLIREFLMIAVFRMLDLLLFYVFPESVPIPMFIIIGVWGSRQRKIKAAYQFFLYTLLGSLFMLLAILLILFQTGTTDLQISLTTEFSERRQIFLWIASFASFAVKVPMVPVHIWLPEAHVEAPTAGSVILAGIPLKFGTHGFLRFSIPMFPEATLCSTPFIYTLSAIAIIYTSLTTSRQIDLKKIIAYSSVAHMNLVTIGMFSPNIQGIGGSILPMLSHGLVPSALFLCVGVLYDRHKTRLVRYYGGLVSTMPNLSTIFFSFTLANMSSPGTSSFIGEFPILVGAFQRNSLVATLAALGMILGAAYSLWLYNRVVSGNLKPDFLHKFSDSNGREVSIFIPFLVGLVRMGVHPKVFPDCMHTSVSNLVQHGKFH</sequence>
<comment type="function">
    <text evidence="1">Core subunit of the mitochondrial membrane respiratory chain NADH dehydrogenase (Complex I) that is believed to belong to the minimal assembly required for catalysis. Complex I functions in the transfer of electrons from NADH to the respiratory chain. The immediate electron acceptor for the enzyme is believed to be ubiquinone (By similarity).</text>
</comment>
<comment type="catalytic activity">
    <reaction>
        <text>a ubiquinone + NADH + 5 H(+)(in) = a ubiquinol + NAD(+) + 4 H(+)(out)</text>
        <dbReference type="Rhea" id="RHEA:29091"/>
        <dbReference type="Rhea" id="RHEA-COMP:9565"/>
        <dbReference type="Rhea" id="RHEA-COMP:9566"/>
        <dbReference type="ChEBI" id="CHEBI:15378"/>
        <dbReference type="ChEBI" id="CHEBI:16389"/>
        <dbReference type="ChEBI" id="CHEBI:17976"/>
        <dbReference type="ChEBI" id="CHEBI:57540"/>
        <dbReference type="ChEBI" id="CHEBI:57945"/>
        <dbReference type="EC" id="7.1.1.2"/>
    </reaction>
</comment>
<comment type="subcellular location">
    <subcellularLocation>
        <location evidence="1">Mitochondrion membrane</location>
        <topology evidence="1">Multi-pass membrane protein</topology>
    </subcellularLocation>
</comment>
<comment type="similarity">
    <text evidence="3">Belongs to the complex I subunit 4 family.</text>
</comment>
<accession>Q04050</accession>
<evidence type="ECO:0000250" key="1"/>
<evidence type="ECO:0000255" key="2"/>
<evidence type="ECO:0000305" key="3"/>
<keyword id="KW-0249">Electron transport</keyword>
<keyword id="KW-0472">Membrane</keyword>
<keyword id="KW-0496">Mitochondrion</keyword>
<keyword id="KW-0520">NAD</keyword>
<keyword id="KW-1185">Reference proteome</keyword>
<keyword id="KW-0679">Respiratory chain</keyword>
<keyword id="KW-1278">Translocase</keyword>
<keyword id="KW-0812">Transmembrane</keyword>
<keyword id="KW-1133">Transmembrane helix</keyword>
<keyword id="KW-0813">Transport</keyword>
<keyword id="KW-0830">Ubiquinone</keyword>
<feature type="chain" id="PRO_0000117907" description="NADH-ubiquinone oxidoreductase chain 4">
    <location>
        <begin position="1"/>
        <end position="495"/>
    </location>
</feature>
<feature type="transmembrane region" description="Helical" evidence="2">
    <location>
        <begin position="9"/>
        <end position="29"/>
    </location>
</feature>
<feature type="transmembrane region" description="Helical" evidence="2">
    <location>
        <begin position="39"/>
        <end position="59"/>
    </location>
</feature>
<feature type="transmembrane region" description="Helical" evidence="2">
    <location>
        <begin position="89"/>
        <end position="109"/>
    </location>
</feature>
<feature type="transmembrane region" description="Helical" evidence="2">
    <location>
        <begin position="139"/>
        <end position="159"/>
    </location>
</feature>
<feature type="transmembrane region" description="Helical" evidence="2">
    <location>
        <begin position="173"/>
        <end position="193"/>
    </location>
</feature>
<feature type="transmembrane region" description="Helical" evidence="2">
    <location>
        <begin position="214"/>
        <end position="234"/>
    </location>
</feature>
<feature type="transmembrane region" description="Helical" evidence="2">
    <location>
        <begin position="272"/>
        <end position="292"/>
    </location>
</feature>
<feature type="transmembrane region" description="Helical" evidence="2">
    <location>
        <begin position="313"/>
        <end position="333"/>
    </location>
</feature>
<feature type="transmembrane region" description="Helical" evidence="2">
    <location>
        <begin position="335"/>
        <end position="355"/>
    </location>
</feature>
<feature type="transmembrane region" description="Helical" evidence="2">
    <location>
        <begin position="367"/>
        <end position="387"/>
    </location>
</feature>
<feature type="transmembrane region" description="Helical" evidence="2">
    <location>
        <begin position="413"/>
        <end position="433"/>
    </location>
</feature>
<proteinExistence type="inferred from homology"/>
<gene>
    <name type="primary">ND4</name>
    <name type="synonym">NAD4</name>
</gene>
<protein>
    <recommendedName>
        <fullName>NADH-ubiquinone oxidoreductase chain 4</fullName>
        <ecNumber>7.1.1.2</ecNumber>
    </recommendedName>
    <alternativeName>
        <fullName>NADH dehydrogenase subunit 4</fullName>
    </alternativeName>
</protein>
<organism>
    <name type="scientific">Brassica campestris</name>
    <name type="common">Field mustard</name>
    <dbReference type="NCBI Taxonomy" id="3711"/>
    <lineage>
        <taxon>Eukaryota</taxon>
        <taxon>Viridiplantae</taxon>
        <taxon>Streptophyta</taxon>
        <taxon>Embryophyta</taxon>
        <taxon>Tracheophyta</taxon>
        <taxon>Spermatophyta</taxon>
        <taxon>Magnoliopsida</taxon>
        <taxon>eudicotyledons</taxon>
        <taxon>Gunneridae</taxon>
        <taxon>Pentapetalae</taxon>
        <taxon>rosids</taxon>
        <taxon>malvids</taxon>
        <taxon>Brassicales</taxon>
        <taxon>Brassicaceae</taxon>
        <taxon>Brassiceae</taxon>
        <taxon>Brassica</taxon>
    </lineage>
</organism>
<name>NU4M_BRACM</name>
<geneLocation type="mitochondrion"/>
<reference key="1">
    <citation type="journal article" date="1992" name="Curr. Genet.">
        <title>Variable intron content of the NADH dehydrogenase subunit 4 gene of plant mitochondria.</title>
        <authorList>
            <person name="Gass D.A."/>
            <person name="Makaroff C.A."/>
            <person name="Palmer J.D."/>
        </authorList>
    </citation>
    <scope>NUCLEOTIDE SEQUENCE [GENOMIC DNA]</scope>
    <source>
        <strain>cv. Purple Top White Globe</strain>
        <tissue>Leaf</tissue>
    </source>
</reference>
<dbReference type="EC" id="7.1.1.2"/>
<dbReference type="EMBL" id="X60794">
    <property type="protein sequence ID" value="CAA43207.1"/>
    <property type="molecule type" value="Genomic_DNA"/>
</dbReference>
<dbReference type="PIR" id="S26870">
    <property type="entry name" value="S26870"/>
</dbReference>
<dbReference type="SMR" id="Q04050"/>
<dbReference type="Proteomes" id="UP000011750">
    <property type="component" value="Unplaced"/>
</dbReference>
<dbReference type="GO" id="GO:0031966">
    <property type="term" value="C:mitochondrial membrane"/>
    <property type="evidence" value="ECO:0007669"/>
    <property type="project" value="UniProtKB-SubCell"/>
</dbReference>
<dbReference type="GO" id="GO:0009536">
    <property type="term" value="C:plastid"/>
    <property type="evidence" value="ECO:0007669"/>
    <property type="project" value="UniProtKB-ARBA"/>
</dbReference>
<dbReference type="GO" id="GO:0045271">
    <property type="term" value="C:respiratory chain complex I"/>
    <property type="evidence" value="ECO:0000318"/>
    <property type="project" value="GO_Central"/>
</dbReference>
<dbReference type="GO" id="GO:0008137">
    <property type="term" value="F:NADH dehydrogenase (ubiquinone) activity"/>
    <property type="evidence" value="ECO:0007669"/>
    <property type="project" value="UniProtKB-EC"/>
</dbReference>
<dbReference type="GO" id="GO:0048039">
    <property type="term" value="F:ubiquinone binding"/>
    <property type="evidence" value="ECO:0000318"/>
    <property type="project" value="GO_Central"/>
</dbReference>
<dbReference type="GO" id="GO:0009060">
    <property type="term" value="P:aerobic respiration"/>
    <property type="evidence" value="ECO:0000318"/>
    <property type="project" value="GO_Central"/>
</dbReference>
<dbReference type="GO" id="GO:0042773">
    <property type="term" value="P:ATP synthesis coupled electron transport"/>
    <property type="evidence" value="ECO:0007669"/>
    <property type="project" value="InterPro"/>
</dbReference>
<dbReference type="GO" id="GO:0015990">
    <property type="term" value="P:electron transport coupled proton transport"/>
    <property type="evidence" value="ECO:0000318"/>
    <property type="project" value="GO_Central"/>
</dbReference>
<dbReference type="InterPro" id="IPR010227">
    <property type="entry name" value="NADH_Q_OxRdtase_chainM/4"/>
</dbReference>
<dbReference type="InterPro" id="IPR003918">
    <property type="entry name" value="NADH_UbQ_OxRdtase"/>
</dbReference>
<dbReference type="InterPro" id="IPR001750">
    <property type="entry name" value="ND/Mrp_TM"/>
</dbReference>
<dbReference type="NCBIfam" id="TIGR01972">
    <property type="entry name" value="NDH_I_M"/>
    <property type="match status" value="1"/>
</dbReference>
<dbReference type="NCBIfam" id="NF004499">
    <property type="entry name" value="PRK05846.1-3"/>
    <property type="match status" value="1"/>
</dbReference>
<dbReference type="PANTHER" id="PTHR43507">
    <property type="entry name" value="NADH-UBIQUINONE OXIDOREDUCTASE CHAIN 4"/>
    <property type="match status" value="1"/>
</dbReference>
<dbReference type="PANTHER" id="PTHR43507:SF1">
    <property type="entry name" value="NADH-UBIQUINONE OXIDOREDUCTASE CHAIN 4"/>
    <property type="match status" value="1"/>
</dbReference>
<dbReference type="Pfam" id="PF00361">
    <property type="entry name" value="Proton_antipo_M"/>
    <property type="match status" value="1"/>
</dbReference>
<dbReference type="PRINTS" id="PR01437">
    <property type="entry name" value="NUOXDRDTASE4"/>
</dbReference>